<protein>
    <recommendedName>
        <fullName>Gibberellin 3-beta-dioxygenase 1</fullName>
        <ecNumber evidence="13">1.14.11.15</ecNumber>
    </recommendedName>
    <alternativeName>
        <fullName>GA 3-oxidase 1</fullName>
        <shortName>AtGA3ox1</shortName>
    </alternativeName>
    <alternativeName>
        <fullName>Gibberellin 3 beta-hydroxylase 1</fullName>
    </alternativeName>
</protein>
<keyword id="KW-0223">Dioxygenase</keyword>
<keyword id="KW-0408">Iron</keyword>
<keyword id="KW-0479">Metal-binding</keyword>
<keyword id="KW-0560">Oxidoreductase</keyword>
<keyword id="KW-1185">Reference proteome</keyword>
<organism>
    <name type="scientific">Arabidopsis thaliana</name>
    <name type="common">Mouse-ear cress</name>
    <dbReference type="NCBI Taxonomy" id="3702"/>
    <lineage>
        <taxon>Eukaryota</taxon>
        <taxon>Viridiplantae</taxon>
        <taxon>Streptophyta</taxon>
        <taxon>Embryophyta</taxon>
        <taxon>Tracheophyta</taxon>
        <taxon>Spermatophyta</taxon>
        <taxon>Magnoliopsida</taxon>
        <taxon>eudicotyledons</taxon>
        <taxon>Gunneridae</taxon>
        <taxon>Pentapetalae</taxon>
        <taxon>rosids</taxon>
        <taxon>malvids</taxon>
        <taxon>Brassicales</taxon>
        <taxon>Brassicaceae</taxon>
        <taxon>Camelineae</taxon>
        <taxon>Arabidopsis</taxon>
    </lineage>
</organism>
<accession>Q39103</accession>
<accession>Q0WTG6</accession>
<gene>
    <name type="primary">GA3OX1</name>
    <name evidence="15" type="synonym">GA4</name>
    <name type="ordered locus">At1g15550</name>
    <name type="ORF">T16N11.6</name>
</gene>
<name>G3OX1_ARATH</name>
<evidence type="ECO:0000250" key="1"/>
<evidence type="ECO:0000255" key="2"/>
<evidence type="ECO:0000255" key="3">
    <source>
        <dbReference type="PROSITE-ProRule" id="PRU00805"/>
    </source>
</evidence>
<evidence type="ECO:0000269" key="4">
    <source>
    </source>
</evidence>
<evidence type="ECO:0000269" key="5">
    <source>
    </source>
</evidence>
<evidence type="ECO:0000269" key="6">
    <source>
    </source>
</evidence>
<evidence type="ECO:0000269" key="7">
    <source>
    </source>
</evidence>
<evidence type="ECO:0000269" key="8">
    <source>
    </source>
</evidence>
<evidence type="ECO:0000269" key="9">
    <source>
    </source>
</evidence>
<evidence type="ECO:0000269" key="10">
    <source>
    </source>
</evidence>
<evidence type="ECO:0000269" key="11">
    <source>
    </source>
</evidence>
<evidence type="ECO:0000269" key="12">
    <source>
    </source>
</evidence>
<evidence type="ECO:0000269" key="13">
    <source>
    </source>
</evidence>
<evidence type="ECO:0000269" key="14">
    <source>
    </source>
</evidence>
<evidence type="ECO:0000303" key="15">
    <source>
    </source>
</evidence>
<evidence type="ECO:0000305" key="16"/>
<evidence type="ECO:0000305" key="17">
    <source>
    </source>
</evidence>
<comment type="function">
    <text evidence="9 13 14">Converts the inactive gibberellin (GA) precursors GA9 and GA20 into the bioactives gibberellins GA4 and GA1, respectively. Involved in the production of bioactive GA for vegetative growth and development.</text>
</comment>
<comment type="catalytic activity">
    <reaction evidence="13">
        <text>gibberellin A9 + 2-oxoglutarate + O2 = gibberellin A4 + succinate + CO2</text>
        <dbReference type="Rhea" id="RHEA:68996"/>
        <dbReference type="ChEBI" id="CHEBI:15379"/>
        <dbReference type="ChEBI" id="CHEBI:16526"/>
        <dbReference type="ChEBI" id="CHEBI:16810"/>
        <dbReference type="ChEBI" id="CHEBI:30031"/>
        <dbReference type="ChEBI" id="CHEBI:73251"/>
        <dbReference type="ChEBI" id="CHEBI:73255"/>
    </reaction>
    <physiologicalReaction direction="left-to-right" evidence="17">
        <dbReference type="Rhea" id="RHEA:68997"/>
    </physiologicalReaction>
</comment>
<comment type="catalytic activity">
    <reaction evidence="13">
        <text>gibberellin A20 + 2-oxoglutarate + O2 = gibberellin A1 + succinate + CO2</text>
        <dbReference type="Rhea" id="RHEA:10104"/>
        <dbReference type="ChEBI" id="CHEBI:15379"/>
        <dbReference type="ChEBI" id="CHEBI:16526"/>
        <dbReference type="ChEBI" id="CHEBI:16810"/>
        <dbReference type="ChEBI" id="CHEBI:30031"/>
        <dbReference type="ChEBI" id="CHEBI:58524"/>
        <dbReference type="ChEBI" id="CHEBI:58526"/>
        <dbReference type="EC" id="1.14.11.15"/>
    </reaction>
    <physiologicalReaction direction="left-to-right" evidence="17">
        <dbReference type="Rhea" id="RHEA:10105"/>
    </physiologicalReaction>
</comment>
<comment type="cofactor">
    <cofactor evidence="1">
        <name>L-ascorbate</name>
        <dbReference type="ChEBI" id="CHEBI:38290"/>
    </cofactor>
</comment>
<comment type="cofactor">
    <cofactor evidence="1">
        <name>Fe cation</name>
        <dbReference type="ChEBI" id="CHEBI:24875"/>
    </cofactor>
</comment>
<comment type="biophysicochemical properties">
    <kinetics>
        <KM evidence="13">1 uM for GA9</KM>
        <KM evidence="13">15 uM for GA20</KM>
        <KM evidence="6">1.25 uM for GA9</KM>
        <KM evidence="6">10 uM for GA20</KM>
        <Vmax evidence="13">6.8 pmol/min/mg enzyme with GA9 as substrate</Vmax>
        <Vmax evidence="13">2.8 pmol/min/mg enzyme with GA20 as substrate</Vmax>
        <Vmax evidence="6">800.0 nmol/min/mg enzyme with GA9 as substrate</Vmax>
        <Vmax evidence="6">62.0 nmol/min/mg enzyme with GA20 as substrate</Vmax>
    </kinetics>
    <phDependence>
        <text evidence="6">Optimum pH is 7.5.</text>
    </phDependence>
</comment>
<comment type="pathway">
    <text>Plant hormone biosynthesis; gibberellin biosynthesis.</text>
</comment>
<comment type="interaction">
    <interactant intactId="EBI-4426378">
        <id>Q39103</id>
    </interactant>
    <interactant intactId="EBI-4426649">
        <id>Q17TI5</id>
        <label>BRX</label>
    </interactant>
    <organismsDiffer>false</organismsDiffer>
    <experiments>5</experiments>
</comment>
<comment type="interaction">
    <interactant intactId="EBI-4426378">
        <id>Q39103</id>
    </interactant>
    <interactant intactId="EBI-1536925">
        <id>Q9FYK5</id>
        <label>ESR2</label>
    </interactant>
    <organismsDiffer>false</organismsDiffer>
    <experiments>5</experiments>
</comment>
<comment type="interaction">
    <interactant intactId="EBI-4426378">
        <id>Q39103</id>
    </interactant>
    <interactant intactId="EBI-3133404">
        <id>Q9XFM0</id>
        <label>IAA28</label>
    </interactant>
    <organismsDiffer>false</organismsDiffer>
    <experiments>5</experiments>
</comment>
<comment type="interaction">
    <interactant intactId="EBI-4426378">
        <id>Q39103</id>
    </interactant>
    <interactant intactId="EBI-1536703">
        <id>Q9FUA4</id>
        <label>SPT</label>
    </interactant>
    <organismsDiffer>false</organismsDiffer>
    <experiments>3</experiments>
</comment>
<comment type="interaction">
    <interactant intactId="EBI-4426378">
        <id>Q39103</id>
    </interactant>
    <interactant intactId="EBI-15192297">
        <id>Q9LQF0</id>
        <label>TCP23</label>
    </interactant>
    <organismsDiffer>false</organismsDiffer>
    <experiments>3</experiments>
</comment>
<comment type="interaction">
    <interactant intactId="EBI-4426378">
        <id>Q39103</id>
    </interactant>
    <interactant intactId="EBI-4426557">
        <id>Q84MB2</id>
        <label>TIFY8</label>
    </interactant>
    <organismsDiffer>false</organismsDiffer>
    <experiments>3</experiments>
</comment>
<comment type="interaction">
    <interactant intactId="EBI-4426378">
        <id>Q39103</id>
    </interactant>
    <interactant intactId="EBI-4424568">
        <id>Q9LVG2</id>
        <label>TOE2</label>
    </interactant>
    <organismsDiffer>false</organismsDiffer>
    <experiments>4</experiments>
</comment>
<comment type="tissue specificity">
    <text evidence="4 8 9 11 12">Expressed in stems, roots, leaves, flowers, and siliques. Highly expressed near the nodes in stems and in the stamen filaments of flowers. Detected in developing cotyledons, vegetative shoot apical meristem and non-meristematic, non-elongation regions of the roots. Found in the cortex and the endodermis of the embryo axis in germinating seeds and in the placenta in developing siliques.</text>
</comment>
<comment type="developmental stage">
    <text evidence="8 14">Expressed in germinating seeds and in very young seedlings. Expressed in developing siliques 3-13 days after pollination.</text>
</comment>
<comment type="induction">
    <text evidence="5 7 10 11 12 14">Inhibited by GA3, indicating the existence of a probable feedback loop. Inhibited by dihydro gibberellins. Regulated by phytochrome. Induced sharply after red light pulse with a peak at 4 hours, and then decreases rapidly as germination occurs. Increases again when etiolated seedling growth begins. Not regulated by long day exposure or auxin. Up-regulated by cold treatment, paclobutrazol and uniconazole P.</text>
</comment>
<comment type="disruption phenotype">
    <text evidence="9 12">Semi-dwarf. Ga3ox1 and ga3ox2 double mutant has a severe defect in seed germination and root growth, and a dwarf phenotype.</text>
</comment>
<comment type="similarity">
    <text evidence="16">Belongs to the iron/ascorbate-dependent oxidoreductase family. GA3OX subfamily.</text>
</comment>
<sequence>MPAMLTDVFRGHPIHLPHSHIPDFTSLRELPDSYKWTPKDDLLFSAAPSPPATGENIPLIDLDHPDATNQIGHACRTWGAFQISNHGVPLGLLQDIEFLTGSLFGLPVQRKLKSARSETGVSGYGVARIASFFNKQMWSEGFTITGSPLNDFRKLWPQHHLNYCDIVEEYEEHMKKLASKLMWLALNSLGVSEEDIEWASLSSDLNWAQAALQLNHYPVCPEPDRAMGLAAHTDSTLLTILYQNNTAGLQVFRDDLGWVTVPPFPGSLVVNVGDLFHILSNGLFKSVLHRARVNQTRARLSVAFLWGPQSDIKISPVPKLVSPVESPLYQSVTWKEYLRTKATHFNKALSMIRNHREE</sequence>
<reference key="1">
    <citation type="journal article" date="1995" name="Plant Cell">
        <title>Isolation of the Arabidopsis GA4 locus.</title>
        <authorList>
            <person name="Chiang H.-H."/>
            <person name="Hwang I."/>
            <person name="Goodman H.M."/>
        </authorList>
    </citation>
    <scope>NUCLEOTIDE SEQUENCE [MRNA]</scope>
    <scope>MUTAGENESIS OF CYS-220</scope>
    <scope>INDUCTION</scope>
    <scope>TISSUE SPECIFICITY</scope>
    <scope>DISRUPTION PHENOTYPE</scope>
    <source>
        <strain>cv. Landsberg erecta</strain>
    </source>
</reference>
<reference key="2">
    <citation type="journal article" date="2000" name="Nature">
        <title>Sequence and analysis of chromosome 1 of the plant Arabidopsis thaliana.</title>
        <authorList>
            <person name="Theologis A."/>
            <person name="Ecker J.R."/>
            <person name="Palm C.J."/>
            <person name="Federspiel N.A."/>
            <person name="Kaul S."/>
            <person name="White O."/>
            <person name="Alonso J."/>
            <person name="Altafi H."/>
            <person name="Araujo R."/>
            <person name="Bowman C.L."/>
            <person name="Brooks S.Y."/>
            <person name="Buehler E."/>
            <person name="Chan A."/>
            <person name="Chao Q."/>
            <person name="Chen H."/>
            <person name="Cheuk R.F."/>
            <person name="Chin C.W."/>
            <person name="Chung M.K."/>
            <person name="Conn L."/>
            <person name="Conway A.B."/>
            <person name="Conway A.R."/>
            <person name="Creasy T.H."/>
            <person name="Dewar K."/>
            <person name="Dunn P."/>
            <person name="Etgu P."/>
            <person name="Feldblyum T.V."/>
            <person name="Feng J.-D."/>
            <person name="Fong B."/>
            <person name="Fujii C.Y."/>
            <person name="Gill J.E."/>
            <person name="Goldsmith A.D."/>
            <person name="Haas B."/>
            <person name="Hansen N.F."/>
            <person name="Hughes B."/>
            <person name="Huizar L."/>
            <person name="Hunter J.L."/>
            <person name="Jenkins J."/>
            <person name="Johnson-Hopson C."/>
            <person name="Khan S."/>
            <person name="Khaykin E."/>
            <person name="Kim C.J."/>
            <person name="Koo H.L."/>
            <person name="Kremenetskaia I."/>
            <person name="Kurtz D.B."/>
            <person name="Kwan A."/>
            <person name="Lam B."/>
            <person name="Langin-Hooper S."/>
            <person name="Lee A."/>
            <person name="Lee J.M."/>
            <person name="Lenz C.A."/>
            <person name="Li J.H."/>
            <person name="Li Y.-P."/>
            <person name="Lin X."/>
            <person name="Liu S.X."/>
            <person name="Liu Z.A."/>
            <person name="Luros J.S."/>
            <person name="Maiti R."/>
            <person name="Marziali A."/>
            <person name="Militscher J."/>
            <person name="Miranda M."/>
            <person name="Nguyen M."/>
            <person name="Nierman W.C."/>
            <person name="Osborne B.I."/>
            <person name="Pai G."/>
            <person name="Peterson J."/>
            <person name="Pham P.K."/>
            <person name="Rizzo M."/>
            <person name="Rooney T."/>
            <person name="Rowley D."/>
            <person name="Sakano H."/>
            <person name="Salzberg S.L."/>
            <person name="Schwartz J.R."/>
            <person name="Shinn P."/>
            <person name="Southwick A.M."/>
            <person name="Sun H."/>
            <person name="Tallon L.J."/>
            <person name="Tambunga G."/>
            <person name="Toriumi M.J."/>
            <person name="Town C.D."/>
            <person name="Utterback T."/>
            <person name="Van Aken S."/>
            <person name="Vaysberg M."/>
            <person name="Vysotskaia V.S."/>
            <person name="Walker M."/>
            <person name="Wu D."/>
            <person name="Yu G."/>
            <person name="Fraser C.M."/>
            <person name="Venter J.C."/>
            <person name="Davis R.W."/>
        </authorList>
    </citation>
    <scope>NUCLEOTIDE SEQUENCE [LARGE SCALE GENOMIC DNA]</scope>
    <source>
        <strain>cv. Columbia</strain>
    </source>
</reference>
<reference key="3">
    <citation type="journal article" date="2017" name="Plant J.">
        <title>Araport11: a complete reannotation of the Arabidopsis thaliana reference genome.</title>
        <authorList>
            <person name="Cheng C.Y."/>
            <person name="Krishnakumar V."/>
            <person name="Chan A.P."/>
            <person name="Thibaud-Nissen F."/>
            <person name="Schobel S."/>
            <person name="Town C.D."/>
        </authorList>
    </citation>
    <scope>GENOME REANNOTATION</scope>
    <source>
        <strain>cv. Columbia</strain>
    </source>
</reference>
<reference key="4">
    <citation type="journal article" date="2003" name="Science">
        <title>Empirical analysis of transcriptional activity in the Arabidopsis genome.</title>
        <authorList>
            <person name="Yamada K."/>
            <person name="Lim J."/>
            <person name="Dale J.M."/>
            <person name="Chen H."/>
            <person name="Shinn P."/>
            <person name="Palm C.J."/>
            <person name="Southwick A.M."/>
            <person name="Wu H.C."/>
            <person name="Kim C.J."/>
            <person name="Nguyen M."/>
            <person name="Pham P.K."/>
            <person name="Cheuk R.F."/>
            <person name="Karlin-Newmann G."/>
            <person name="Liu S.X."/>
            <person name="Lam B."/>
            <person name="Sakano H."/>
            <person name="Wu T."/>
            <person name="Yu G."/>
            <person name="Miranda M."/>
            <person name="Quach H.L."/>
            <person name="Tripp M."/>
            <person name="Chang C.H."/>
            <person name="Lee J.M."/>
            <person name="Toriumi M.J."/>
            <person name="Chan M.M."/>
            <person name="Tang C.C."/>
            <person name="Onodera C.S."/>
            <person name="Deng J.M."/>
            <person name="Akiyama K."/>
            <person name="Ansari Y."/>
            <person name="Arakawa T."/>
            <person name="Banh J."/>
            <person name="Banno F."/>
            <person name="Bowser L."/>
            <person name="Brooks S.Y."/>
            <person name="Carninci P."/>
            <person name="Chao Q."/>
            <person name="Choy N."/>
            <person name="Enju A."/>
            <person name="Goldsmith A.D."/>
            <person name="Gurjal M."/>
            <person name="Hansen N.F."/>
            <person name="Hayashizaki Y."/>
            <person name="Johnson-Hopson C."/>
            <person name="Hsuan V.W."/>
            <person name="Iida K."/>
            <person name="Karnes M."/>
            <person name="Khan S."/>
            <person name="Koesema E."/>
            <person name="Ishida J."/>
            <person name="Jiang P.X."/>
            <person name="Jones T."/>
            <person name="Kawai J."/>
            <person name="Kamiya A."/>
            <person name="Meyers C."/>
            <person name="Nakajima M."/>
            <person name="Narusaka M."/>
            <person name="Seki M."/>
            <person name="Sakurai T."/>
            <person name="Satou M."/>
            <person name="Tamse R."/>
            <person name="Vaysberg M."/>
            <person name="Wallender E.K."/>
            <person name="Wong C."/>
            <person name="Yamamura Y."/>
            <person name="Yuan S."/>
            <person name="Shinozaki K."/>
            <person name="Davis R.W."/>
            <person name="Theologis A."/>
            <person name="Ecker J.R."/>
        </authorList>
    </citation>
    <scope>NUCLEOTIDE SEQUENCE [LARGE SCALE MRNA]</scope>
    <source>
        <strain>cv. Columbia</strain>
    </source>
</reference>
<reference key="5">
    <citation type="submission" date="2006-07" db="EMBL/GenBank/DDBJ databases">
        <title>Large-scale analysis of RIKEN Arabidopsis full-length (RAFL) cDNAs.</title>
        <authorList>
            <person name="Totoki Y."/>
            <person name="Seki M."/>
            <person name="Ishida J."/>
            <person name="Nakajima M."/>
            <person name="Enju A."/>
            <person name="Kamiya A."/>
            <person name="Narusaka M."/>
            <person name="Shin-i T."/>
            <person name="Nakagawa M."/>
            <person name="Sakamoto N."/>
            <person name="Oishi K."/>
            <person name="Kohara Y."/>
            <person name="Kobayashi M."/>
            <person name="Toyoda A."/>
            <person name="Sakaki Y."/>
            <person name="Sakurai T."/>
            <person name="Iida K."/>
            <person name="Akiyama K."/>
            <person name="Satou M."/>
            <person name="Toyoda T."/>
            <person name="Konagaya A."/>
            <person name="Carninci P."/>
            <person name="Kawai J."/>
            <person name="Hayashizaki Y."/>
            <person name="Shinozaki K."/>
        </authorList>
    </citation>
    <scope>NUCLEOTIDE SEQUENCE [LARGE SCALE MRNA]</scope>
    <source>
        <strain>cv. Columbia</strain>
    </source>
</reference>
<reference key="6">
    <citation type="journal article" date="1998" name="Plant Physiol.">
        <title>Function and substrate specificity of the gibberellin 3beta-hydroxylase encoded by the Arabidopsis GA4 gene.</title>
        <authorList>
            <person name="Williams J."/>
            <person name="Phillips A.L."/>
            <person name="Gaskin P."/>
            <person name="Hedden P."/>
        </authorList>
    </citation>
    <scope>FUNCTION</scope>
    <scope>CATALYTIC ACTIVITY</scope>
    <scope>BIOPHYSICOCHEMICAL PROPERTIES</scope>
</reference>
<reference key="7">
    <citation type="journal article" date="1998" name="Plant Cell">
        <title>Phytochrome regulation and differential expression of gibberellin 3beta-hydroxylase genes in germinating Arabidopsis seeds.</title>
        <authorList>
            <person name="Yamaguchi S."/>
            <person name="Smith M.W."/>
            <person name="Brown R.G.S."/>
            <person name="Kamiya Y."/>
            <person name="Sun T.-P."/>
        </authorList>
    </citation>
    <scope>FUNCTION</scope>
    <scope>INDUCTION</scope>
    <scope>DEVELOPMENTAL STAGE</scope>
</reference>
<reference key="8">
    <citation type="journal article" date="2001" name="Plant J.">
        <title>Distinct cell-specific expression patterns of early and late gibberellin biosynthetic genes during Arabidopsis seed germination.</title>
        <authorList>
            <person name="Yamaguchi S."/>
            <person name="Kamiya Y."/>
            <person name="Sun T.-P."/>
        </authorList>
    </citation>
    <scope>TISSUE SPECIFICITY</scope>
</reference>
<reference key="9">
    <citation type="journal article" date="2004" name="Plant Physiol.">
        <title>16,17-dihydro gibberellin A5 competitively inhibits a recombinant Arabidopsis GA 3beta-hydroxylase encoded by the GA4 gene.</title>
        <authorList>
            <person name="Zhou R."/>
            <person name="Yu M."/>
            <person name="Pharis R.P."/>
        </authorList>
    </citation>
    <scope>CHARACTERIZATION</scope>
    <scope>BIOPHYSICOCHEMICAL PROPERTIES</scope>
</reference>
<reference key="10">
    <citation type="journal article" date="2004" name="Plant Cell">
        <title>Activation of gibberellin biosynthesis and response pathways by low temperature during imbibition of Arabidopsis thaliana seeds.</title>
        <authorList>
            <person name="Yamauchi Y."/>
            <person name="Ogawa M."/>
            <person name="Kuwahara A."/>
            <person name="Hanada A."/>
            <person name="Kamiya Y."/>
            <person name="Yamaguchi S."/>
        </authorList>
    </citation>
    <scope>INDUCTION BY COLD</scope>
</reference>
<reference key="11">
    <citation type="journal article" date="2005" name="Plant Cell Physiol.">
        <title>Contribution of gibberellins to the formation of Arabidopsis seed coat through starch degradation.</title>
        <authorList>
            <person name="Kim Y.C."/>
            <person name="Nakajima M."/>
            <person name="Nakayama A."/>
            <person name="Yamaguchi I."/>
        </authorList>
    </citation>
    <scope>DEVELOPMENTAL STAGE</scope>
    <scope>TISSUE SPECIFICITY</scope>
</reference>
<reference key="12">
    <citation type="journal article" date="2005" name="Plant Physiol.">
        <title>The involvement of gibberellin 20-oxidase genes in phytochrome-regulated petiole elongation of Arabidopsis.</title>
        <authorList>
            <person name="Hisamatsu T."/>
            <person name="King R.W."/>
            <person name="Helliwell C.A."/>
            <person name="Koshioka M."/>
        </authorList>
    </citation>
    <scope>INDUCTION BY LIGHT</scope>
</reference>
<reference key="13">
    <citation type="journal article" date="2006" name="Plant J.">
        <title>Distinct and overlapping roles of two gibberellin 3-oxidases in Arabidopsis development.</title>
        <authorList>
            <person name="Mitchum M.G."/>
            <person name="Yamaguchi S."/>
            <person name="Hanada A."/>
            <person name="Kuwahara A."/>
            <person name="Yoshioka Y."/>
            <person name="Kato T."/>
            <person name="Tabata S."/>
            <person name="Kamiya Y."/>
            <person name="Sun T.P."/>
        </authorList>
    </citation>
    <scope>FUNCTION</scope>
    <scope>TISSUE SPECIFICITY</scope>
    <scope>DISRUPTION PHENOTYPE</scope>
</reference>
<reference key="14">
    <citation type="journal article" date="2006" name="Plant Physiol.">
        <title>Transcriptional regulation of gibberellin metabolism genes by auxin signaling in Arabidopsis.</title>
        <authorList>
            <person name="Frigerio M."/>
            <person name="Alabadi D."/>
            <person name="Perez-Gomez J."/>
            <person name="Garcia-Carcel L."/>
            <person name="Phillips A.L."/>
            <person name="Hedden P."/>
            <person name="Blazquez M.A."/>
        </authorList>
    </citation>
    <scope>INDUCTION BY AUXIN AND PACLOBUTRAZOL</scope>
</reference>
<reference key="15">
    <citation type="journal article" date="2007" name="Plant Physiol.">
        <title>AGF1, an AT-hook protein, is necessary for the negative feedback of AtGA3ox1 encoding GA 3-oxidase.</title>
        <authorList>
            <person name="Matsushita A."/>
            <person name="Furumoto T."/>
            <person name="Ishida S."/>
            <person name="Takahashi Y."/>
        </authorList>
    </citation>
    <scope>TISSUE SPECIFICITY</scope>
    <scope>INDUCTION</scope>
</reference>
<reference key="16">
    <citation type="journal article" date="2011" name="Gene">
        <title>Evolutionary analysis of three gibberellin oxidase genes in rice, Arabidopsis, and soybean.</title>
        <authorList>
            <person name="Han F."/>
            <person name="Zhu B."/>
        </authorList>
    </citation>
    <scope>GENE FAMILY</scope>
</reference>
<feature type="chain" id="PRO_0000067313" description="Gibberellin 3-beta-dioxygenase 1">
    <location>
        <begin position="1"/>
        <end position="358"/>
    </location>
</feature>
<feature type="domain" description="Fe2OG dioxygenase" evidence="3">
    <location>
        <begin position="204"/>
        <end position="308"/>
    </location>
</feature>
<feature type="active site" evidence="2">
    <location>
        <position position="299"/>
    </location>
</feature>
<feature type="binding site" evidence="3">
    <location>
        <position position="232"/>
    </location>
    <ligand>
        <name>Fe cation</name>
        <dbReference type="ChEBI" id="CHEBI:24875"/>
    </ligand>
</feature>
<feature type="binding site" evidence="3">
    <location>
        <position position="234"/>
    </location>
    <ligand>
        <name>Fe cation</name>
        <dbReference type="ChEBI" id="CHEBI:24875"/>
    </ligand>
</feature>
<feature type="binding site" evidence="3">
    <location>
        <position position="289"/>
    </location>
    <ligand>
        <name>Fe cation</name>
        <dbReference type="ChEBI" id="CHEBI:24875"/>
    </ligand>
</feature>
<feature type="mutagenesis site" description="In ga4-1; semidwarf and deficient in active gibberellins." evidence="12">
    <original>C</original>
    <variation>Y</variation>
    <location>
        <position position="220"/>
    </location>
</feature>
<dbReference type="EC" id="1.14.11.15" evidence="13"/>
<dbReference type="EMBL" id="L37126">
    <property type="protein sequence ID" value="AAC37506.1"/>
    <property type="molecule type" value="mRNA"/>
</dbReference>
<dbReference type="EMBL" id="AC013453">
    <property type="protein sequence ID" value="AAF71980.1"/>
    <property type="molecule type" value="Genomic_DNA"/>
</dbReference>
<dbReference type="EMBL" id="CP002684">
    <property type="protein sequence ID" value="AEE29335.1"/>
    <property type="molecule type" value="Genomic_DNA"/>
</dbReference>
<dbReference type="EMBL" id="BT005827">
    <property type="protein sequence ID" value="AAO64762.1"/>
    <property type="molecule type" value="mRNA"/>
</dbReference>
<dbReference type="EMBL" id="AK227590">
    <property type="protein sequence ID" value="BAE99582.1"/>
    <property type="molecule type" value="mRNA"/>
</dbReference>
<dbReference type="PIR" id="D86289">
    <property type="entry name" value="D86289"/>
</dbReference>
<dbReference type="RefSeq" id="NP_173008.1">
    <property type="nucleotide sequence ID" value="NM_101424.3"/>
</dbReference>
<dbReference type="SMR" id="Q39103"/>
<dbReference type="BioGRID" id="23365">
    <property type="interactions" value="10"/>
</dbReference>
<dbReference type="FunCoup" id="Q39103">
    <property type="interactions" value="20"/>
</dbReference>
<dbReference type="IntAct" id="Q39103">
    <property type="interactions" value="8"/>
</dbReference>
<dbReference type="STRING" id="3702.Q39103"/>
<dbReference type="PaxDb" id="3702-AT1G15550.1"/>
<dbReference type="EnsemblPlants" id="AT1G15550.1">
    <property type="protein sequence ID" value="AT1G15550.1"/>
    <property type="gene ID" value="AT1G15550"/>
</dbReference>
<dbReference type="GeneID" id="838125"/>
<dbReference type="Gramene" id="AT1G15550.1">
    <property type="protein sequence ID" value="AT1G15550.1"/>
    <property type="gene ID" value="AT1G15550"/>
</dbReference>
<dbReference type="KEGG" id="ath:AT1G15550"/>
<dbReference type="Araport" id="AT1G15550"/>
<dbReference type="TAIR" id="AT1G15550">
    <property type="gene designation" value="GA3OX1"/>
</dbReference>
<dbReference type="eggNOG" id="KOG0143">
    <property type="taxonomic scope" value="Eukaryota"/>
</dbReference>
<dbReference type="HOGENOM" id="CLU_010119_16_3_1"/>
<dbReference type="InParanoid" id="Q39103"/>
<dbReference type="OMA" id="GHACKKW"/>
<dbReference type="OrthoDB" id="288590at2759"/>
<dbReference type="PhylomeDB" id="Q39103"/>
<dbReference type="BioCyc" id="ARA:AT1G15550-MONOMER"/>
<dbReference type="BioCyc" id="MetaCyc:AT1G15550-MONOMER"/>
<dbReference type="BRENDA" id="1.14.11.15">
    <property type="organism ID" value="399"/>
</dbReference>
<dbReference type="SABIO-RK" id="Q39103"/>
<dbReference type="UniPathway" id="UPA00390"/>
<dbReference type="PRO" id="PR:Q39103"/>
<dbReference type="Proteomes" id="UP000006548">
    <property type="component" value="Chromosome 1"/>
</dbReference>
<dbReference type="ExpressionAtlas" id="Q39103">
    <property type="expression patterns" value="baseline and differential"/>
</dbReference>
<dbReference type="GO" id="GO:0005737">
    <property type="term" value="C:cytoplasm"/>
    <property type="evidence" value="ECO:0000304"/>
    <property type="project" value="TAIR"/>
</dbReference>
<dbReference type="GO" id="GO:0016707">
    <property type="term" value="F:gibberellin 3-beta-dioxygenase activity"/>
    <property type="evidence" value="ECO:0000314"/>
    <property type="project" value="TAIR"/>
</dbReference>
<dbReference type="GO" id="GO:0046872">
    <property type="term" value="F:metal ion binding"/>
    <property type="evidence" value="ECO:0007669"/>
    <property type="project" value="UniProtKB-KW"/>
</dbReference>
<dbReference type="GO" id="GO:0009740">
    <property type="term" value="P:gibberellic acid mediated signaling pathway"/>
    <property type="evidence" value="ECO:0000304"/>
    <property type="project" value="TAIR"/>
</dbReference>
<dbReference type="GO" id="GO:0009686">
    <property type="term" value="P:gibberellin biosynthetic process"/>
    <property type="evidence" value="ECO:0000304"/>
    <property type="project" value="TAIR"/>
</dbReference>
<dbReference type="GO" id="GO:0009739">
    <property type="term" value="P:response to gibberellin"/>
    <property type="evidence" value="ECO:0000270"/>
    <property type="project" value="TAIR"/>
</dbReference>
<dbReference type="GO" id="GO:0010114">
    <property type="term" value="P:response to red light"/>
    <property type="evidence" value="ECO:0000270"/>
    <property type="project" value="TAIR"/>
</dbReference>
<dbReference type="GO" id="GO:0009639">
    <property type="term" value="P:response to red or far red light"/>
    <property type="evidence" value="ECO:0000270"/>
    <property type="project" value="TAIR"/>
</dbReference>
<dbReference type="FunFam" id="2.60.120.330:FF:000013">
    <property type="entry name" value="Gibberellin 3-beta-dioxygenase 1"/>
    <property type="match status" value="1"/>
</dbReference>
<dbReference type="Gene3D" id="2.60.120.330">
    <property type="entry name" value="B-lactam Antibiotic, Isopenicillin N Synthase, Chain"/>
    <property type="match status" value="1"/>
</dbReference>
<dbReference type="InterPro" id="IPR026992">
    <property type="entry name" value="DIOX_N"/>
</dbReference>
<dbReference type="InterPro" id="IPR044861">
    <property type="entry name" value="IPNS-like_FE2OG_OXY"/>
</dbReference>
<dbReference type="InterPro" id="IPR027443">
    <property type="entry name" value="IPNS-like_sf"/>
</dbReference>
<dbReference type="InterPro" id="IPR050231">
    <property type="entry name" value="Iron_ascorbate_oxido_reductase"/>
</dbReference>
<dbReference type="InterPro" id="IPR005123">
    <property type="entry name" value="Oxoglu/Fe-dep_dioxygenase_dom"/>
</dbReference>
<dbReference type="PANTHER" id="PTHR47990">
    <property type="entry name" value="2-OXOGLUTARATE (2OG) AND FE(II)-DEPENDENT OXYGENASE SUPERFAMILY PROTEIN-RELATED"/>
    <property type="match status" value="1"/>
</dbReference>
<dbReference type="Pfam" id="PF03171">
    <property type="entry name" value="2OG-FeII_Oxy"/>
    <property type="match status" value="1"/>
</dbReference>
<dbReference type="Pfam" id="PF14226">
    <property type="entry name" value="DIOX_N"/>
    <property type="match status" value="1"/>
</dbReference>
<dbReference type="PRINTS" id="PR00682">
    <property type="entry name" value="IPNSYNTHASE"/>
</dbReference>
<dbReference type="SUPFAM" id="SSF51197">
    <property type="entry name" value="Clavaminate synthase-like"/>
    <property type="match status" value="1"/>
</dbReference>
<dbReference type="PROSITE" id="PS51471">
    <property type="entry name" value="FE2OG_OXY"/>
    <property type="match status" value="1"/>
</dbReference>
<proteinExistence type="evidence at protein level"/>